<gene>
    <name type="ordered locus">Pcryo_0061</name>
</gene>
<accession>Q1QEQ8</accession>
<reference key="1">
    <citation type="submission" date="2006-03" db="EMBL/GenBank/DDBJ databases">
        <title>Complete sequence of chromosome of Psychrobacter cryohalolentis K5.</title>
        <authorList>
            <consortium name="US DOE Joint Genome Institute"/>
            <person name="Copeland A."/>
            <person name="Lucas S."/>
            <person name="Lapidus A."/>
            <person name="Barry K."/>
            <person name="Detter J.C."/>
            <person name="Glavina T."/>
            <person name="Hammon N."/>
            <person name="Israni S."/>
            <person name="Dalin E."/>
            <person name="Tice H."/>
            <person name="Pitluck S."/>
            <person name="Brettin T."/>
            <person name="Bruce D."/>
            <person name="Han C."/>
            <person name="Tapia R."/>
            <person name="Sims D.R."/>
            <person name="Gilna P."/>
            <person name="Schmutz J."/>
            <person name="Larimer F."/>
            <person name="Land M."/>
            <person name="Hauser L."/>
            <person name="Kyrpides N."/>
            <person name="Kim E."/>
            <person name="Richardson P."/>
        </authorList>
    </citation>
    <scope>NUCLEOTIDE SEQUENCE [LARGE SCALE GENOMIC DNA]</scope>
    <source>
        <strain>ATCC BAA-1226 / DSM 17306 / VKM B-2378 / K5</strain>
    </source>
</reference>
<keyword id="KW-0963">Cytoplasm</keyword>
<keyword id="KW-0378">Hydrolase</keyword>
<keyword id="KW-0540">Nuclease</keyword>
<keyword id="KW-0690">Ribosome biogenesis</keyword>
<protein>
    <recommendedName>
        <fullName evidence="1">Putative pre-16S rRNA nuclease</fullName>
        <ecNumber evidence="1">3.1.-.-</ecNumber>
    </recommendedName>
</protein>
<name>YQGF_PSYCK</name>
<organism>
    <name type="scientific">Psychrobacter cryohalolentis (strain ATCC BAA-1226 / DSM 17306 / VKM B-2378 / K5)</name>
    <dbReference type="NCBI Taxonomy" id="335284"/>
    <lineage>
        <taxon>Bacteria</taxon>
        <taxon>Pseudomonadati</taxon>
        <taxon>Pseudomonadota</taxon>
        <taxon>Gammaproteobacteria</taxon>
        <taxon>Moraxellales</taxon>
        <taxon>Moraxellaceae</taxon>
        <taxon>Psychrobacter</taxon>
    </lineage>
</organism>
<evidence type="ECO:0000255" key="1">
    <source>
        <dbReference type="HAMAP-Rule" id="MF_00651"/>
    </source>
</evidence>
<feature type="chain" id="PRO_0000257570" description="Putative pre-16S rRNA nuclease">
    <location>
        <begin position="1"/>
        <end position="173"/>
    </location>
</feature>
<sequence>MVDSTLIKDSTDTSVAEPVIKPHLILALDYGVKKMGMALGNSLTETARAFDILAMNNGQPDWDNLLGIIKVWGVAKVVVGLPLNMDGSSSMLSKRAHKFARRLAHRIMEQHLPVIVSLCDERLTSVAAREIAWENGWIKHERAPIDDISACILMSTYFADPHSSIAIDAIKAD</sequence>
<comment type="function">
    <text evidence="1">Could be a nuclease involved in processing of the 5'-end of pre-16S rRNA.</text>
</comment>
<comment type="subcellular location">
    <subcellularLocation>
        <location evidence="1">Cytoplasm</location>
    </subcellularLocation>
</comment>
<comment type="similarity">
    <text evidence="1">Belongs to the YqgF nuclease family.</text>
</comment>
<proteinExistence type="inferred from homology"/>
<dbReference type="EC" id="3.1.-.-" evidence="1"/>
<dbReference type="EMBL" id="CP000323">
    <property type="protein sequence ID" value="ABE73845.1"/>
    <property type="molecule type" value="Genomic_DNA"/>
</dbReference>
<dbReference type="RefSeq" id="WP_011512436.1">
    <property type="nucleotide sequence ID" value="NC_007969.1"/>
</dbReference>
<dbReference type="SMR" id="Q1QEQ8"/>
<dbReference type="STRING" id="335284.Pcryo_0061"/>
<dbReference type="KEGG" id="pcr:Pcryo_0061"/>
<dbReference type="eggNOG" id="COG0816">
    <property type="taxonomic scope" value="Bacteria"/>
</dbReference>
<dbReference type="HOGENOM" id="CLU_098240_3_0_6"/>
<dbReference type="Proteomes" id="UP000002425">
    <property type="component" value="Chromosome"/>
</dbReference>
<dbReference type="GO" id="GO:0005829">
    <property type="term" value="C:cytosol"/>
    <property type="evidence" value="ECO:0007669"/>
    <property type="project" value="TreeGrafter"/>
</dbReference>
<dbReference type="GO" id="GO:0004518">
    <property type="term" value="F:nuclease activity"/>
    <property type="evidence" value="ECO:0007669"/>
    <property type="project" value="UniProtKB-KW"/>
</dbReference>
<dbReference type="GO" id="GO:0000967">
    <property type="term" value="P:rRNA 5'-end processing"/>
    <property type="evidence" value="ECO:0007669"/>
    <property type="project" value="UniProtKB-UniRule"/>
</dbReference>
<dbReference type="CDD" id="cd16964">
    <property type="entry name" value="YqgF"/>
    <property type="match status" value="1"/>
</dbReference>
<dbReference type="Gene3D" id="3.30.420.140">
    <property type="entry name" value="YqgF/RNase H-like domain"/>
    <property type="match status" value="1"/>
</dbReference>
<dbReference type="HAMAP" id="MF_00651">
    <property type="entry name" value="Nuclease_YqgF"/>
    <property type="match status" value="1"/>
</dbReference>
<dbReference type="InterPro" id="IPR012337">
    <property type="entry name" value="RNaseH-like_sf"/>
</dbReference>
<dbReference type="InterPro" id="IPR005227">
    <property type="entry name" value="YqgF"/>
</dbReference>
<dbReference type="InterPro" id="IPR006641">
    <property type="entry name" value="YqgF/RNaseH-like_dom"/>
</dbReference>
<dbReference type="InterPro" id="IPR037027">
    <property type="entry name" value="YqgF/RNaseH-like_dom_sf"/>
</dbReference>
<dbReference type="NCBIfam" id="TIGR00250">
    <property type="entry name" value="RNAse_H_YqgF"/>
    <property type="match status" value="1"/>
</dbReference>
<dbReference type="PANTHER" id="PTHR33317">
    <property type="entry name" value="POLYNUCLEOTIDYL TRANSFERASE, RIBONUCLEASE H-LIKE SUPERFAMILY PROTEIN"/>
    <property type="match status" value="1"/>
</dbReference>
<dbReference type="PANTHER" id="PTHR33317:SF4">
    <property type="entry name" value="POLYNUCLEOTIDYL TRANSFERASE, RIBONUCLEASE H-LIKE SUPERFAMILY PROTEIN"/>
    <property type="match status" value="1"/>
</dbReference>
<dbReference type="Pfam" id="PF03652">
    <property type="entry name" value="RuvX"/>
    <property type="match status" value="1"/>
</dbReference>
<dbReference type="SMART" id="SM00732">
    <property type="entry name" value="YqgFc"/>
    <property type="match status" value="1"/>
</dbReference>
<dbReference type="SUPFAM" id="SSF53098">
    <property type="entry name" value="Ribonuclease H-like"/>
    <property type="match status" value="1"/>
</dbReference>